<sequence>ARGPKKHLKRINAPKSWMLNKLGGIWATRPSQGPHKLRESLPLSVLLKERLNYALNGRDVTLILNDKEGNVFVDQKVRRDKGYPTGLMDVVRIEKTDQSFRILYDTKGRFVLKSLSKEEAKYKLLKVTAKAIGPNQIPYIVTHDSRTIRFPNPEIKIGDTLKYDLVNNKIENFAHLESGNVCYIQQGNNIGRVGIIQHIEKHQGSFDICHVKDAKGNAFATRLGNIFVLGQGKKLYIELPSGDGVRETILEERKRKFSY</sequence>
<feature type="chain" id="PRO_0000260291" description="Small ribosomal subunit protein eS4">
    <location>
        <begin position="1"/>
        <end position="259"/>
    </location>
</feature>
<feature type="domain" description="S4 RNA-binding">
    <location>
        <begin position="41"/>
        <end position="105"/>
    </location>
</feature>
<feature type="modified residue" description="Phosphothreonine" evidence="1">
    <location>
        <position position="248"/>
    </location>
</feature>
<feature type="modified residue" description="Phosphoserine" evidence="1">
    <location>
        <position position="258"/>
    </location>
</feature>
<proteinExistence type="evidence at protein level"/>
<organism>
    <name type="scientific">Tetrahymena thermophila</name>
    <dbReference type="NCBI Taxonomy" id="5911"/>
    <lineage>
        <taxon>Eukaryota</taxon>
        <taxon>Sar</taxon>
        <taxon>Alveolata</taxon>
        <taxon>Ciliophora</taxon>
        <taxon>Intramacronucleata</taxon>
        <taxon>Oligohymenophorea</taxon>
        <taxon>Hymenostomatida</taxon>
        <taxon>Tetrahymenina</taxon>
        <taxon>Tetrahymenidae</taxon>
        <taxon>Tetrahymena</taxon>
    </lineage>
</organism>
<accession>P0C233</accession>
<protein>
    <recommendedName>
        <fullName evidence="2">Small ribosomal subunit protein eS4</fullName>
    </recommendedName>
    <alternativeName>
        <fullName>40S ribosomal protein S4</fullName>
    </alternativeName>
    <alternativeName>
        <fullName>40S ribosomal protein S7</fullName>
    </alternativeName>
</protein>
<evidence type="ECO:0000269" key="1">
    <source>
    </source>
</evidence>
<evidence type="ECO:0000305" key="2"/>
<dbReference type="PDB" id="4BTS">
    <property type="method" value="X-ray"/>
    <property type="resolution" value="3.70 A"/>
    <property type="chains" value="W=1-259"/>
</dbReference>
<dbReference type="PDB" id="4V5O">
    <property type="method" value="X-ray"/>
    <property type="resolution" value="3.93 A"/>
    <property type="chains" value="AW/BW=1-259"/>
</dbReference>
<dbReference type="PDB" id="5JPQ">
    <property type="method" value="EM"/>
    <property type="resolution" value="7.30 A"/>
    <property type="chains" value="p=1-259"/>
</dbReference>
<dbReference type="PDBsum" id="4BTS"/>
<dbReference type="PDBsum" id="4V5O"/>
<dbReference type="PDBsum" id="5JPQ"/>
<dbReference type="SMR" id="P0C233"/>
<dbReference type="IntAct" id="P0C233">
    <property type="interactions" value="1"/>
</dbReference>
<dbReference type="iPTMnet" id="P0C233"/>
<dbReference type="GO" id="GO:0022627">
    <property type="term" value="C:cytosolic small ribosomal subunit"/>
    <property type="evidence" value="ECO:0007669"/>
    <property type="project" value="TreeGrafter"/>
</dbReference>
<dbReference type="GO" id="GO:0019843">
    <property type="term" value="F:rRNA binding"/>
    <property type="evidence" value="ECO:0007669"/>
    <property type="project" value="UniProtKB-KW"/>
</dbReference>
<dbReference type="GO" id="GO:0003735">
    <property type="term" value="F:structural constituent of ribosome"/>
    <property type="evidence" value="ECO:0007669"/>
    <property type="project" value="InterPro"/>
</dbReference>
<dbReference type="GO" id="GO:0006412">
    <property type="term" value="P:translation"/>
    <property type="evidence" value="ECO:0007669"/>
    <property type="project" value="InterPro"/>
</dbReference>
<dbReference type="CDD" id="cd06087">
    <property type="entry name" value="KOW_RPS4"/>
    <property type="match status" value="1"/>
</dbReference>
<dbReference type="FunFam" id="2.30.30.30:FF:000005">
    <property type="entry name" value="40S ribosomal protein S4"/>
    <property type="match status" value="1"/>
</dbReference>
<dbReference type="FunFam" id="2.40.50.740:FF:000001">
    <property type="entry name" value="40S ribosomal protein S4"/>
    <property type="match status" value="1"/>
</dbReference>
<dbReference type="FunFam" id="3.10.290.10:FF:000002">
    <property type="entry name" value="40S ribosomal protein S4"/>
    <property type="match status" value="1"/>
</dbReference>
<dbReference type="Gene3D" id="2.30.30.30">
    <property type="match status" value="1"/>
</dbReference>
<dbReference type="Gene3D" id="2.40.50.740">
    <property type="match status" value="1"/>
</dbReference>
<dbReference type="Gene3D" id="3.10.290.10">
    <property type="entry name" value="RNA-binding S4 domain"/>
    <property type="match status" value="1"/>
</dbReference>
<dbReference type="HAMAP" id="MF_00485">
    <property type="entry name" value="Ribosomal_eS4"/>
    <property type="match status" value="1"/>
</dbReference>
<dbReference type="InterPro" id="IPR014722">
    <property type="entry name" value="Rib_uL2_dom2"/>
</dbReference>
<dbReference type="InterPro" id="IPR000876">
    <property type="entry name" value="Ribosomal_eS4"/>
</dbReference>
<dbReference type="InterPro" id="IPR032277">
    <property type="entry name" value="Ribosomal_eS4_C"/>
</dbReference>
<dbReference type="InterPro" id="IPR013845">
    <property type="entry name" value="Ribosomal_eS4_central_region"/>
</dbReference>
<dbReference type="InterPro" id="IPR038237">
    <property type="entry name" value="Ribosomal_eS4_central_sf"/>
</dbReference>
<dbReference type="InterPro" id="IPR041982">
    <property type="entry name" value="Ribosomal_eS4_KOW"/>
</dbReference>
<dbReference type="InterPro" id="IPR013843">
    <property type="entry name" value="Ribosomal_eS4_N"/>
</dbReference>
<dbReference type="InterPro" id="IPR018199">
    <property type="entry name" value="Ribosomal_eS4_N_CS"/>
</dbReference>
<dbReference type="InterPro" id="IPR036986">
    <property type="entry name" value="S4_RNA-bd_sf"/>
</dbReference>
<dbReference type="PANTHER" id="PTHR11581">
    <property type="entry name" value="30S/40S RIBOSOMAL PROTEIN S4"/>
    <property type="match status" value="1"/>
</dbReference>
<dbReference type="PANTHER" id="PTHR11581:SF0">
    <property type="entry name" value="SMALL RIBOSOMAL SUBUNIT PROTEIN ES4"/>
    <property type="match status" value="1"/>
</dbReference>
<dbReference type="Pfam" id="PF16121">
    <property type="entry name" value="40S_S4_C"/>
    <property type="match status" value="1"/>
</dbReference>
<dbReference type="Pfam" id="PF00900">
    <property type="entry name" value="Ribosomal_S4e"/>
    <property type="match status" value="1"/>
</dbReference>
<dbReference type="Pfam" id="PF08071">
    <property type="entry name" value="RS4NT"/>
    <property type="match status" value="1"/>
</dbReference>
<dbReference type="PIRSF" id="PIRSF002116">
    <property type="entry name" value="Ribosomal_S4"/>
    <property type="match status" value="1"/>
</dbReference>
<dbReference type="PROSITE" id="PS00528">
    <property type="entry name" value="RIBOSOMAL_S4E"/>
    <property type="match status" value="1"/>
</dbReference>
<keyword id="KW-0002">3D-structure</keyword>
<keyword id="KW-0903">Direct protein sequencing</keyword>
<keyword id="KW-0597">Phosphoprotein</keyword>
<keyword id="KW-0687">Ribonucleoprotein</keyword>
<keyword id="KW-0689">Ribosomal protein</keyword>
<keyword id="KW-0694">RNA-binding</keyword>
<keyword id="KW-0699">rRNA-binding</keyword>
<comment type="similarity">
    <text evidence="2">Belongs to the eukaryotic ribosomal protein eS4 family.</text>
</comment>
<reference key="1">
    <citation type="journal article" date="1995" name="J. Biol. Chem.">
        <title>The phosphorylated ribosomal protein S7 in Tetrahymena is homologous with mammalian S4 and the phosphorylated residues are located in the C-terminal region. Structural characterization of proteins separated by two-dimensional polyacrylamide gel electrophoresis.</title>
        <authorList>
            <person name="Palm L."/>
            <person name="Andersen J."/>
            <person name="Rahbek-Nielsen H."/>
            <person name="Hansen T.S."/>
            <person name="Kristiansen K."/>
            <person name="Hoejrup P."/>
        </authorList>
    </citation>
    <scope>PROTEIN SEQUENCE</scope>
    <scope>PHOSPHORYLATION AT THR-248 AND SER-258</scope>
</reference>
<name>RS4_TETTH</name>